<feature type="chain" id="PRO_0000436094" description="Allergen Act d 13" evidence="4">
    <location>
        <begin position="1" status="less than"/>
        <end position="8" status="greater than"/>
    </location>
</feature>
<feature type="non-terminal residue" evidence="3">
    <location>
        <position position="1"/>
    </location>
</feature>
<feature type="non-terminal residue" evidence="3">
    <location>
        <position position="8"/>
    </location>
</feature>
<comment type="tissue specificity">
    <text evidence="1">Expressed in seeds but not in fruit pulp.</text>
</comment>
<comment type="mass spectrometry" mass="11359.0" method="MALDI" evidence="2">
    <text>The measured range is 1-?.</text>
</comment>
<comment type="allergen">
    <text evidence="1">Causes an allergic reaction in human. Binds to IgE.</text>
</comment>
<name>ALL13_ACTDE</name>
<keyword id="KW-0020">Allergen</keyword>
<keyword id="KW-0903">Direct protein sequencing</keyword>
<organism evidence="3">
    <name type="scientific">Actinidia deliciosa</name>
    <name type="common">Kiwi</name>
    <dbReference type="NCBI Taxonomy" id="3627"/>
    <lineage>
        <taxon>Eukaryota</taxon>
        <taxon>Viridiplantae</taxon>
        <taxon>Streptophyta</taxon>
        <taxon>Embryophyta</taxon>
        <taxon>Tracheophyta</taxon>
        <taxon>Spermatophyta</taxon>
        <taxon>Magnoliopsida</taxon>
        <taxon>eudicotyledons</taxon>
        <taxon>Gunneridae</taxon>
        <taxon>Pentapetalae</taxon>
        <taxon>asterids</taxon>
        <taxon>Ericales</taxon>
        <taxon>Actinidiaceae</taxon>
        <taxon>Actinidia</taxon>
    </lineage>
</organism>
<accession>C0HJG0</accession>
<sequence length="8" mass="963">GPQQQHRL</sequence>
<evidence type="ECO:0000269" key="1">
    <source>
    </source>
</evidence>
<evidence type="ECO:0000269" key="2">
    <source>
    </source>
</evidence>
<evidence type="ECO:0000303" key="3">
    <source>
    </source>
</evidence>
<evidence type="ECO:0000305" key="4"/>
<evidence type="ECO:0000305" key="5">
    <source>
    </source>
</evidence>
<proteinExistence type="evidence at protein level"/>
<protein>
    <recommendedName>
        <fullName evidence="3">Allergen Act d 13</fullName>
    </recommendedName>
    <allergenName evidence="5">Act d 13</allergenName>
</protein>
<dbReference type="Allergome" id="11424">
    <property type="allergen name" value="Act d 13"/>
</dbReference>
<dbReference type="Allergome" id="11948">
    <property type="allergen name" value="Act d 13.0101"/>
</dbReference>
<reference evidence="4" key="1">
    <citation type="journal article" date="2014" name="J. Allergy Clin. Immunol.">
        <title>Act d 12 and Act d 13: two novel, masked, relevant allergens in kiwifruit seeds.</title>
        <authorList>
            <person name="Sirvent S."/>
            <person name="Canto B."/>
            <person name="Cuesta-Herranz J."/>
            <person name="Gomez F."/>
            <person name="Blanca N."/>
            <person name="Canto G."/>
            <person name="Blanca M."/>
            <person name="Rodriguez R."/>
            <person name="Villalba M."/>
            <person name="Palomares O."/>
        </authorList>
    </citation>
    <scope>PROTEIN SEQUENCE</scope>
    <scope>TISSUE SPECIFICITY</scope>
    <scope>ALLERGEN</scope>
    <scope>IDENTIFICATION BY MASS SPECTROMETRY</scope>
    <source>
        <tissue evidence="3">Seed</tissue>
    </source>
</reference>
<reference key="2">
    <citation type="journal article" date="2014" name="Allergy">
        <title>Detailed characterization of Act d 12 and Act d 13 from kiwi seeds: implication in IgE cross-reactivity with peanut and tree nuts.</title>
        <authorList>
            <person name="Sirvent S."/>
            <person name="Canto B."/>
            <person name="Gomez F."/>
            <person name="Blanca N."/>
            <person name="Cuesta-Herranz J."/>
            <person name="Canto G."/>
            <person name="Blanca M."/>
            <person name="Rodriguez R."/>
            <person name="Villalba M."/>
            <person name="Palomares O."/>
        </authorList>
    </citation>
    <scope>MASS SPECTROMETRY</scope>
</reference>